<keyword id="KW-0627">Porphyrin biosynthesis</keyword>
<keyword id="KW-0808">Transferase</keyword>
<reference key="1">
    <citation type="submission" date="2006-08" db="EMBL/GenBank/DDBJ databases">
        <title>Complete sequence of chromosome 1 of Shewanella sp. MR-7.</title>
        <authorList>
            <person name="Copeland A."/>
            <person name="Lucas S."/>
            <person name="Lapidus A."/>
            <person name="Barry K."/>
            <person name="Detter J.C."/>
            <person name="Glavina del Rio T."/>
            <person name="Hammon N."/>
            <person name="Israni S."/>
            <person name="Dalin E."/>
            <person name="Tice H."/>
            <person name="Pitluck S."/>
            <person name="Kiss H."/>
            <person name="Brettin T."/>
            <person name="Bruce D."/>
            <person name="Han C."/>
            <person name="Tapia R."/>
            <person name="Gilna P."/>
            <person name="Schmutz J."/>
            <person name="Larimer F."/>
            <person name="Land M."/>
            <person name="Hauser L."/>
            <person name="Kyrpides N."/>
            <person name="Mikhailova N."/>
            <person name="Nealson K."/>
            <person name="Konstantinidis K."/>
            <person name="Klappenbach J."/>
            <person name="Tiedje J."/>
            <person name="Richardson P."/>
        </authorList>
    </citation>
    <scope>NUCLEOTIDE SEQUENCE [LARGE SCALE GENOMIC DNA]</scope>
    <source>
        <strain>MR-7</strain>
    </source>
</reference>
<name>HEM3_SHESR</name>
<gene>
    <name evidence="1" type="primary">hemC</name>
    <name type="ordered locus">Shewmr7_3638</name>
</gene>
<protein>
    <recommendedName>
        <fullName evidence="1">Porphobilinogen deaminase</fullName>
        <shortName evidence="1">PBG</shortName>
        <ecNumber evidence="1">2.5.1.61</ecNumber>
    </recommendedName>
    <alternativeName>
        <fullName evidence="1">Hydroxymethylbilane synthase</fullName>
        <shortName evidence="1">HMBS</shortName>
    </alternativeName>
    <alternativeName>
        <fullName evidence="1">Pre-uroporphyrinogen synthase</fullName>
    </alternativeName>
</protein>
<comment type="function">
    <text evidence="1">Tetrapolymerization of the monopyrrole PBG into the hydroxymethylbilane pre-uroporphyrinogen in several discrete steps.</text>
</comment>
<comment type="catalytic activity">
    <reaction evidence="1">
        <text>4 porphobilinogen + H2O = hydroxymethylbilane + 4 NH4(+)</text>
        <dbReference type="Rhea" id="RHEA:13185"/>
        <dbReference type="ChEBI" id="CHEBI:15377"/>
        <dbReference type="ChEBI" id="CHEBI:28938"/>
        <dbReference type="ChEBI" id="CHEBI:57845"/>
        <dbReference type="ChEBI" id="CHEBI:58126"/>
        <dbReference type="EC" id="2.5.1.61"/>
    </reaction>
</comment>
<comment type="cofactor">
    <cofactor evidence="1">
        <name>dipyrromethane</name>
        <dbReference type="ChEBI" id="CHEBI:60342"/>
    </cofactor>
    <text evidence="1">Binds 1 dipyrromethane group covalently.</text>
</comment>
<comment type="pathway">
    <text evidence="1">Porphyrin-containing compound metabolism; protoporphyrin-IX biosynthesis; coproporphyrinogen-III from 5-aminolevulinate: step 2/4.</text>
</comment>
<comment type="subunit">
    <text evidence="1">Monomer.</text>
</comment>
<comment type="miscellaneous">
    <text evidence="1">The porphobilinogen subunits are added to the dipyrromethane group.</text>
</comment>
<comment type="similarity">
    <text evidence="1">Belongs to the HMBS family.</text>
</comment>
<proteinExistence type="inferred from homology"/>
<evidence type="ECO:0000255" key="1">
    <source>
        <dbReference type="HAMAP-Rule" id="MF_00260"/>
    </source>
</evidence>
<organism>
    <name type="scientific">Shewanella sp. (strain MR-7)</name>
    <dbReference type="NCBI Taxonomy" id="60481"/>
    <lineage>
        <taxon>Bacteria</taxon>
        <taxon>Pseudomonadati</taxon>
        <taxon>Pseudomonadota</taxon>
        <taxon>Gammaproteobacteria</taxon>
        <taxon>Alteromonadales</taxon>
        <taxon>Shewanellaceae</taxon>
        <taxon>Shewanella</taxon>
    </lineage>
</organism>
<dbReference type="EC" id="2.5.1.61" evidence="1"/>
<dbReference type="EMBL" id="CP000444">
    <property type="protein sequence ID" value="ABI44618.1"/>
    <property type="molecule type" value="Genomic_DNA"/>
</dbReference>
<dbReference type="SMR" id="Q0HQI7"/>
<dbReference type="KEGG" id="shm:Shewmr7_3638"/>
<dbReference type="HOGENOM" id="CLU_019704_0_2_6"/>
<dbReference type="UniPathway" id="UPA00251">
    <property type="reaction ID" value="UER00319"/>
</dbReference>
<dbReference type="GO" id="GO:0005737">
    <property type="term" value="C:cytoplasm"/>
    <property type="evidence" value="ECO:0007669"/>
    <property type="project" value="TreeGrafter"/>
</dbReference>
<dbReference type="GO" id="GO:0004418">
    <property type="term" value="F:hydroxymethylbilane synthase activity"/>
    <property type="evidence" value="ECO:0007669"/>
    <property type="project" value="UniProtKB-UniRule"/>
</dbReference>
<dbReference type="GO" id="GO:0006782">
    <property type="term" value="P:protoporphyrinogen IX biosynthetic process"/>
    <property type="evidence" value="ECO:0007669"/>
    <property type="project" value="UniProtKB-UniRule"/>
</dbReference>
<dbReference type="CDD" id="cd13646">
    <property type="entry name" value="PBP2_EcHMBS_like"/>
    <property type="match status" value="1"/>
</dbReference>
<dbReference type="FunFam" id="3.30.160.40:FF:000002">
    <property type="entry name" value="Porphobilinogen deaminase"/>
    <property type="match status" value="1"/>
</dbReference>
<dbReference type="FunFam" id="3.40.190.10:FF:000004">
    <property type="entry name" value="Porphobilinogen deaminase"/>
    <property type="match status" value="1"/>
</dbReference>
<dbReference type="FunFam" id="3.40.190.10:FF:000005">
    <property type="entry name" value="Porphobilinogen deaminase"/>
    <property type="match status" value="1"/>
</dbReference>
<dbReference type="Gene3D" id="3.40.190.10">
    <property type="entry name" value="Periplasmic binding protein-like II"/>
    <property type="match status" value="2"/>
</dbReference>
<dbReference type="Gene3D" id="3.30.160.40">
    <property type="entry name" value="Porphobilinogen deaminase, C-terminal domain"/>
    <property type="match status" value="1"/>
</dbReference>
<dbReference type="HAMAP" id="MF_00260">
    <property type="entry name" value="Porphobil_deam"/>
    <property type="match status" value="1"/>
</dbReference>
<dbReference type="InterPro" id="IPR000860">
    <property type="entry name" value="HemC"/>
</dbReference>
<dbReference type="InterPro" id="IPR022419">
    <property type="entry name" value="Porphobilin_deaminase_cofac_BS"/>
</dbReference>
<dbReference type="InterPro" id="IPR022417">
    <property type="entry name" value="Porphobilin_deaminase_N"/>
</dbReference>
<dbReference type="InterPro" id="IPR022418">
    <property type="entry name" value="Porphobilinogen_deaminase_C"/>
</dbReference>
<dbReference type="InterPro" id="IPR036803">
    <property type="entry name" value="Porphobilinogen_deaminase_C_sf"/>
</dbReference>
<dbReference type="NCBIfam" id="TIGR00212">
    <property type="entry name" value="hemC"/>
    <property type="match status" value="1"/>
</dbReference>
<dbReference type="PANTHER" id="PTHR11557">
    <property type="entry name" value="PORPHOBILINOGEN DEAMINASE"/>
    <property type="match status" value="1"/>
</dbReference>
<dbReference type="PANTHER" id="PTHR11557:SF0">
    <property type="entry name" value="PORPHOBILINOGEN DEAMINASE"/>
    <property type="match status" value="1"/>
</dbReference>
<dbReference type="Pfam" id="PF01379">
    <property type="entry name" value="Porphobil_deam"/>
    <property type="match status" value="1"/>
</dbReference>
<dbReference type="Pfam" id="PF03900">
    <property type="entry name" value="Porphobil_deamC"/>
    <property type="match status" value="1"/>
</dbReference>
<dbReference type="PIRSF" id="PIRSF001438">
    <property type="entry name" value="4pyrrol_synth_OHMeBilane_synth"/>
    <property type="match status" value="1"/>
</dbReference>
<dbReference type="PRINTS" id="PR00151">
    <property type="entry name" value="PORPHBDMNASE"/>
</dbReference>
<dbReference type="SUPFAM" id="SSF53850">
    <property type="entry name" value="Periplasmic binding protein-like II"/>
    <property type="match status" value="1"/>
</dbReference>
<dbReference type="SUPFAM" id="SSF54782">
    <property type="entry name" value="Porphobilinogen deaminase (hydroxymethylbilane synthase), C-terminal domain"/>
    <property type="match status" value="1"/>
</dbReference>
<dbReference type="PROSITE" id="PS00533">
    <property type="entry name" value="PORPHOBILINOGEN_DEAM"/>
    <property type="match status" value="1"/>
</dbReference>
<sequence>MSENRIRIATRKSPLAMWQAEFVKAELERVHPGIVVELLPMSTKGDVILDTPLAKVGGKGLFVKELEVAMLEDQADIAVHSMKDVPVDFPEGLGLEVICEREDPRDAFVSNLYKSISELPLGATVGTSSLRRQCQLRASRPDLIIKDLRGNVGTRLAKLDNGEYDAIILAAAGLIRLKLSERIASFISAEESLPANGQGAVGIECRTNDERVKALLAPLEHLETRYRVIAERAMNTRLEGGCQVPIGAFAEIHGDEMTLRGLVGNPDGSEIIEGVITGPKTEATKLGVALAEELLSKGAKSILDAVYAKA</sequence>
<accession>Q0HQI7</accession>
<feature type="chain" id="PRO_0000304274" description="Porphobilinogen deaminase">
    <location>
        <begin position="1"/>
        <end position="310"/>
    </location>
</feature>
<feature type="modified residue" description="S-(dipyrrolylmethanemethyl)cysteine" evidence="1">
    <location>
        <position position="242"/>
    </location>
</feature>